<name>RSMA_HAEIN</name>
<keyword id="KW-0963">Cytoplasm</keyword>
<keyword id="KW-0489">Methyltransferase</keyword>
<keyword id="KW-1185">Reference proteome</keyword>
<keyword id="KW-0694">RNA-binding</keyword>
<keyword id="KW-0698">rRNA processing</keyword>
<keyword id="KW-0949">S-adenosyl-L-methionine</keyword>
<keyword id="KW-0808">Transferase</keyword>
<organism>
    <name type="scientific">Haemophilus influenzae (strain ATCC 51907 / DSM 11121 / KW20 / Rd)</name>
    <dbReference type="NCBI Taxonomy" id="71421"/>
    <lineage>
        <taxon>Bacteria</taxon>
        <taxon>Pseudomonadati</taxon>
        <taxon>Pseudomonadota</taxon>
        <taxon>Gammaproteobacteria</taxon>
        <taxon>Pasteurellales</taxon>
        <taxon>Pasteurellaceae</taxon>
        <taxon>Haemophilus</taxon>
    </lineage>
</organism>
<evidence type="ECO:0000255" key="1">
    <source>
        <dbReference type="HAMAP-Rule" id="MF_00607"/>
    </source>
</evidence>
<proteinExistence type="inferred from homology"/>
<protein>
    <recommendedName>
        <fullName evidence="1">Ribosomal RNA small subunit methyltransferase A</fullName>
        <ecNumber evidence="1">2.1.1.182</ecNumber>
    </recommendedName>
    <alternativeName>
        <fullName evidence="1">16S rRNA (adenine(1518)-N(6)/adenine(1519)-N(6))-dimethyltransferase</fullName>
    </alternativeName>
    <alternativeName>
        <fullName evidence="1">16S rRNA dimethyladenosine transferase</fullName>
    </alternativeName>
    <alternativeName>
        <fullName evidence="1">16S rRNA dimethylase</fullName>
    </alternativeName>
    <alternativeName>
        <fullName evidence="1">S-adenosylmethionine-6-N', N'-adenosyl(rRNA) dimethyltransferase</fullName>
    </alternativeName>
</protein>
<accession>P44749</accession>
<comment type="function">
    <text evidence="1">Specifically dimethylates two adjacent adenosines (A1518 and A1519) in the loop of a conserved hairpin near the 3'-end of 16S rRNA in the 30S particle. May play a critical role in biogenesis of 30S subunits.</text>
</comment>
<comment type="catalytic activity">
    <reaction evidence="1">
        <text>adenosine(1518)/adenosine(1519) in 16S rRNA + 4 S-adenosyl-L-methionine = N(6)-dimethyladenosine(1518)/N(6)-dimethyladenosine(1519) in 16S rRNA + 4 S-adenosyl-L-homocysteine + 4 H(+)</text>
        <dbReference type="Rhea" id="RHEA:19609"/>
        <dbReference type="Rhea" id="RHEA-COMP:10232"/>
        <dbReference type="Rhea" id="RHEA-COMP:10233"/>
        <dbReference type="ChEBI" id="CHEBI:15378"/>
        <dbReference type="ChEBI" id="CHEBI:57856"/>
        <dbReference type="ChEBI" id="CHEBI:59789"/>
        <dbReference type="ChEBI" id="CHEBI:74411"/>
        <dbReference type="ChEBI" id="CHEBI:74493"/>
        <dbReference type="EC" id="2.1.1.182"/>
    </reaction>
</comment>
<comment type="subcellular location">
    <subcellularLocation>
        <location evidence="1">Cytoplasm</location>
    </subcellularLocation>
</comment>
<comment type="similarity">
    <text evidence="1">Belongs to the class I-like SAM-binding methyltransferase superfamily. rRNA adenine N(6)-methyltransferase family. RsmA subfamily.</text>
</comment>
<dbReference type="EC" id="2.1.1.182" evidence="1"/>
<dbReference type="EMBL" id="L42023">
    <property type="protein sequence ID" value="AAC22207.1"/>
    <property type="molecule type" value="Genomic_DNA"/>
</dbReference>
<dbReference type="PIR" id="I64076">
    <property type="entry name" value="I64076"/>
</dbReference>
<dbReference type="RefSeq" id="NP_438707.1">
    <property type="nucleotide sequence ID" value="NC_000907.1"/>
</dbReference>
<dbReference type="SMR" id="P44749"/>
<dbReference type="STRING" id="71421.HI_0549"/>
<dbReference type="EnsemblBacteria" id="AAC22207">
    <property type="protein sequence ID" value="AAC22207"/>
    <property type="gene ID" value="HI_0549"/>
</dbReference>
<dbReference type="KEGG" id="hin:HI_0549"/>
<dbReference type="PATRIC" id="fig|71421.8.peg.569"/>
<dbReference type="eggNOG" id="COG0030">
    <property type="taxonomic scope" value="Bacteria"/>
</dbReference>
<dbReference type="HOGENOM" id="CLU_041220_0_1_6"/>
<dbReference type="OrthoDB" id="9814755at2"/>
<dbReference type="PhylomeDB" id="P44749"/>
<dbReference type="BioCyc" id="HINF71421:G1GJ1-562-MONOMER"/>
<dbReference type="Proteomes" id="UP000000579">
    <property type="component" value="Chromosome"/>
</dbReference>
<dbReference type="GO" id="GO:0005829">
    <property type="term" value="C:cytosol"/>
    <property type="evidence" value="ECO:0000318"/>
    <property type="project" value="GO_Central"/>
</dbReference>
<dbReference type="GO" id="GO:0052908">
    <property type="term" value="F:16S rRNA (adenine(1518)-N(6)/adenine(1519)-N(6))-dimethyltransferase activity"/>
    <property type="evidence" value="ECO:0007669"/>
    <property type="project" value="UniProtKB-EC"/>
</dbReference>
<dbReference type="GO" id="GO:0003723">
    <property type="term" value="F:RNA binding"/>
    <property type="evidence" value="ECO:0007669"/>
    <property type="project" value="UniProtKB-KW"/>
</dbReference>
<dbReference type="GO" id="GO:0000179">
    <property type="term" value="F:rRNA (adenine-N6,N6-)-dimethyltransferase activity"/>
    <property type="evidence" value="ECO:0000318"/>
    <property type="project" value="GO_Central"/>
</dbReference>
<dbReference type="GO" id="GO:0031167">
    <property type="term" value="P:rRNA methylation"/>
    <property type="evidence" value="ECO:0000318"/>
    <property type="project" value="GO_Central"/>
</dbReference>
<dbReference type="FunFam" id="1.10.8.100:FF:000001">
    <property type="entry name" value="Ribosomal RNA small subunit methyltransferase A"/>
    <property type="match status" value="1"/>
</dbReference>
<dbReference type="FunFam" id="3.40.50.150:FF:000006">
    <property type="entry name" value="Ribosomal RNA small subunit methyltransferase A"/>
    <property type="match status" value="1"/>
</dbReference>
<dbReference type="Gene3D" id="1.10.8.100">
    <property type="entry name" value="Ribosomal RNA adenine dimethylase-like, domain 2"/>
    <property type="match status" value="1"/>
</dbReference>
<dbReference type="Gene3D" id="3.40.50.150">
    <property type="entry name" value="Vaccinia Virus protein VP39"/>
    <property type="match status" value="1"/>
</dbReference>
<dbReference type="HAMAP" id="MF_00607">
    <property type="entry name" value="16SrRNA_methyltr_A"/>
    <property type="match status" value="1"/>
</dbReference>
<dbReference type="InterPro" id="IPR001737">
    <property type="entry name" value="KsgA/Erm"/>
</dbReference>
<dbReference type="InterPro" id="IPR023165">
    <property type="entry name" value="rRNA_Ade_diMease-like_C"/>
</dbReference>
<dbReference type="InterPro" id="IPR020596">
    <property type="entry name" value="rRNA_Ade_Mease_Trfase_CS"/>
</dbReference>
<dbReference type="InterPro" id="IPR020598">
    <property type="entry name" value="rRNA_Ade_methylase_Trfase_N"/>
</dbReference>
<dbReference type="InterPro" id="IPR011530">
    <property type="entry name" value="rRNA_adenine_dimethylase"/>
</dbReference>
<dbReference type="InterPro" id="IPR029063">
    <property type="entry name" value="SAM-dependent_MTases_sf"/>
</dbReference>
<dbReference type="NCBIfam" id="TIGR00755">
    <property type="entry name" value="ksgA"/>
    <property type="match status" value="1"/>
</dbReference>
<dbReference type="PANTHER" id="PTHR11727">
    <property type="entry name" value="DIMETHYLADENOSINE TRANSFERASE"/>
    <property type="match status" value="1"/>
</dbReference>
<dbReference type="PANTHER" id="PTHR11727:SF7">
    <property type="entry name" value="DIMETHYLADENOSINE TRANSFERASE-RELATED"/>
    <property type="match status" value="1"/>
</dbReference>
<dbReference type="Pfam" id="PF00398">
    <property type="entry name" value="RrnaAD"/>
    <property type="match status" value="1"/>
</dbReference>
<dbReference type="SMART" id="SM00650">
    <property type="entry name" value="rADc"/>
    <property type="match status" value="1"/>
</dbReference>
<dbReference type="SUPFAM" id="SSF53335">
    <property type="entry name" value="S-adenosyl-L-methionine-dependent methyltransferases"/>
    <property type="match status" value="1"/>
</dbReference>
<dbReference type="PROSITE" id="PS01131">
    <property type="entry name" value="RRNA_A_DIMETH"/>
    <property type="match status" value="1"/>
</dbReference>
<dbReference type="PROSITE" id="PS51689">
    <property type="entry name" value="SAM_RNA_A_N6_MT"/>
    <property type="match status" value="1"/>
</dbReference>
<feature type="chain" id="PRO_0000101538" description="Ribosomal RNA small subunit methyltransferase A">
    <location>
        <begin position="1"/>
        <end position="287"/>
    </location>
</feature>
<feature type="binding site" evidence="1">
    <location>
        <position position="18"/>
    </location>
    <ligand>
        <name>S-adenosyl-L-methionine</name>
        <dbReference type="ChEBI" id="CHEBI:59789"/>
    </ligand>
</feature>
<feature type="binding site" evidence="1">
    <location>
        <position position="20"/>
    </location>
    <ligand>
        <name>S-adenosyl-L-methionine</name>
        <dbReference type="ChEBI" id="CHEBI:59789"/>
    </ligand>
</feature>
<feature type="binding site" evidence="1">
    <location>
        <position position="45"/>
    </location>
    <ligand>
        <name>S-adenosyl-L-methionine</name>
        <dbReference type="ChEBI" id="CHEBI:59789"/>
    </ligand>
</feature>
<feature type="binding site" evidence="1">
    <location>
        <position position="66"/>
    </location>
    <ligand>
        <name>S-adenosyl-L-methionine</name>
        <dbReference type="ChEBI" id="CHEBI:59789"/>
    </ligand>
</feature>
<feature type="binding site" evidence="1">
    <location>
        <position position="91"/>
    </location>
    <ligand>
        <name>S-adenosyl-L-methionine</name>
        <dbReference type="ChEBI" id="CHEBI:59789"/>
    </ligand>
</feature>
<feature type="binding site" evidence="1">
    <location>
        <position position="118"/>
    </location>
    <ligand>
        <name>S-adenosyl-L-methionine</name>
        <dbReference type="ChEBI" id="CHEBI:59789"/>
    </ligand>
</feature>
<reference key="1">
    <citation type="journal article" date="1995" name="Science">
        <title>Whole-genome random sequencing and assembly of Haemophilus influenzae Rd.</title>
        <authorList>
            <person name="Fleischmann R.D."/>
            <person name="Adams M.D."/>
            <person name="White O."/>
            <person name="Clayton R.A."/>
            <person name="Kirkness E.F."/>
            <person name="Kerlavage A.R."/>
            <person name="Bult C.J."/>
            <person name="Tomb J.-F."/>
            <person name="Dougherty B.A."/>
            <person name="Merrick J.M."/>
            <person name="McKenney K."/>
            <person name="Sutton G.G."/>
            <person name="FitzHugh W."/>
            <person name="Fields C.A."/>
            <person name="Gocayne J.D."/>
            <person name="Scott J.D."/>
            <person name="Shirley R."/>
            <person name="Liu L.-I."/>
            <person name="Glodek A."/>
            <person name="Kelley J.M."/>
            <person name="Weidman J.F."/>
            <person name="Phillips C.A."/>
            <person name="Spriggs T."/>
            <person name="Hedblom E."/>
            <person name="Cotton M.D."/>
            <person name="Utterback T.R."/>
            <person name="Hanna M.C."/>
            <person name="Nguyen D.T."/>
            <person name="Saudek D.M."/>
            <person name="Brandon R.C."/>
            <person name="Fine L.D."/>
            <person name="Fritchman J.L."/>
            <person name="Fuhrmann J.L."/>
            <person name="Geoghagen N.S.M."/>
            <person name="Gnehm C.L."/>
            <person name="McDonald L.A."/>
            <person name="Small K.V."/>
            <person name="Fraser C.M."/>
            <person name="Smith H.O."/>
            <person name="Venter J.C."/>
        </authorList>
    </citation>
    <scope>NUCLEOTIDE SEQUENCE [LARGE SCALE GENOMIC DNA]</scope>
    <source>
        <strain>ATCC 51907 / DSM 11121 / KW20 / Rd</strain>
    </source>
</reference>
<sequence>MNSKKHLGHTARKRFGQNFLHDTSVIQGIVAAIYPQPNQFLVEIGPGLGALTEPVGELVDHLTVVELDRDLAERLRHHPFLHQKLTVIETDAMQFDFGALYTKENLAEKGQKLRVFGNLPYNISTPLMFHLFKYHDVIQDMHFMLQKEVVKRLCAAPNSKAYGRLTIMAQYFCQVMPVLEVPPSAFKPAPKVDSAVVRLIPHKELPHPVKDLYWLNRVCSQAFNQRRKTLRNALSTLFSPENLTALGIDLNARAENLAIADYARLANWLADNPPADVNKDEILDSEE</sequence>
<gene>
    <name evidence="1" type="primary">rsmA</name>
    <name evidence="1" type="synonym">ksgA</name>
    <name type="ordered locus">HI_0549</name>
</gene>